<organism>
    <name type="scientific">Rattus norvegicus</name>
    <name type="common">Rat</name>
    <dbReference type="NCBI Taxonomy" id="10116"/>
    <lineage>
        <taxon>Eukaryota</taxon>
        <taxon>Metazoa</taxon>
        <taxon>Chordata</taxon>
        <taxon>Craniata</taxon>
        <taxon>Vertebrata</taxon>
        <taxon>Euteleostomi</taxon>
        <taxon>Mammalia</taxon>
        <taxon>Eutheria</taxon>
        <taxon>Euarchontoglires</taxon>
        <taxon>Glires</taxon>
        <taxon>Rodentia</taxon>
        <taxon>Myomorpha</taxon>
        <taxon>Muroidea</taxon>
        <taxon>Muridae</taxon>
        <taxon>Murinae</taxon>
        <taxon>Rattus</taxon>
    </lineage>
</organism>
<comment type="function">
    <text evidence="2">Acts as a glycogen-targeting subunit for PP1 and regulates its activity. Activates glycogen synthase, reduces glycogen phosphorylase activity and limits glycogen breakdown. Dramatically increases basal and insulin-stimulated glycogen synthesis upon overexpression in a variety of cell types (By similarity).</text>
</comment>
<comment type="subunit">
    <text evidence="2 3">Interacts with PPP1CC catalytic subunit of PP1 and associates with glycogen. Forms complexes with glycogen phosphorylase, glycogen synthase and phosphorylase kinase which is necessary for its regulation of PP1 activity. Also interacts with EPM2A/laforin (By similarity).</text>
</comment>
<comment type="domain">
    <text evidence="2">The N-terminal region is required for binding to PP1, the central region is required for binding to glycogen and the C-terminal region is required for binding to glycogen phosphorylase, glycogen synthase and phosphorylase kinase.</text>
</comment>
<comment type="PTM">
    <text evidence="1">Ubiquitinated by NHLRC1/malin in a EPM2A/laforin-dependent manner.</text>
</comment>
<name>PPR3C_RAT</name>
<feature type="chain" id="PRO_0000285929" description="Protein phosphatase 1 regulatory subunit 3C">
    <location>
        <begin position="1"/>
        <end position="317"/>
    </location>
</feature>
<feature type="domain" description="CBM21" evidence="4">
    <location>
        <begin position="149"/>
        <end position="257"/>
    </location>
</feature>
<feature type="region of interest" description="Interaction with EPM2A" evidence="3">
    <location>
        <begin position="141"/>
        <end position="263"/>
    </location>
</feature>
<feature type="short sequence motif" description="PP1-binding motif">
    <location>
        <begin position="84"/>
        <end position="87"/>
    </location>
</feature>
<evidence type="ECO:0000250" key="1"/>
<evidence type="ECO:0000250" key="2">
    <source>
        <dbReference type="UniProtKB" id="Q7TMB3"/>
    </source>
</evidence>
<evidence type="ECO:0000250" key="3">
    <source>
        <dbReference type="UniProtKB" id="Q9UQK1"/>
    </source>
</evidence>
<evidence type="ECO:0000255" key="4">
    <source>
        <dbReference type="PROSITE-ProRule" id="PRU00491"/>
    </source>
</evidence>
<evidence type="ECO:0000312" key="5">
    <source>
        <dbReference type="EMBL" id="AAH85894.1"/>
    </source>
</evidence>
<protein>
    <recommendedName>
        <fullName>Protein phosphatase 1 regulatory subunit 3C</fullName>
    </recommendedName>
    <alternativeName>
        <fullName>Protein phosphatase 1 regulatory subunit 5</fullName>
        <shortName>PP1 subunit R5</shortName>
    </alternativeName>
    <alternativeName>
        <fullName>Protein targeting to glycogen</fullName>
        <shortName>PTG</shortName>
    </alternativeName>
</protein>
<dbReference type="EMBL" id="BC085894">
    <property type="protein sequence ID" value="AAH85894.1"/>
    <property type="molecule type" value="mRNA"/>
</dbReference>
<dbReference type="RefSeq" id="NP_001012072.1">
    <property type="nucleotide sequence ID" value="NM_001012072.1"/>
</dbReference>
<dbReference type="SMR" id="Q5U2R5"/>
<dbReference type="FunCoup" id="Q5U2R5">
    <property type="interactions" value="139"/>
</dbReference>
<dbReference type="STRING" id="10116.ENSRNOP00000024941"/>
<dbReference type="CAZy" id="CBM21">
    <property type="family name" value="Carbohydrate-Binding Module Family 21"/>
</dbReference>
<dbReference type="iPTMnet" id="Q5U2R5"/>
<dbReference type="PhosphoSitePlus" id="Q5U2R5"/>
<dbReference type="PaxDb" id="10116-ENSRNOP00000024941"/>
<dbReference type="GeneID" id="309513"/>
<dbReference type="KEGG" id="rno:309513"/>
<dbReference type="UCSC" id="RGD:1309132">
    <property type="organism name" value="rat"/>
</dbReference>
<dbReference type="AGR" id="RGD:1309132"/>
<dbReference type="CTD" id="5507"/>
<dbReference type="RGD" id="1309132">
    <property type="gene designation" value="Ppp1r3c"/>
</dbReference>
<dbReference type="eggNOG" id="KOG3986">
    <property type="taxonomic scope" value="Eukaryota"/>
</dbReference>
<dbReference type="InParanoid" id="Q5U2R5"/>
<dbReference type="OrthoDB" id="9955at9989"/>
<dbReference type="PhylomeDB" id="Q5U2R5"/>
<dbReference type="Reactome" id="R-RNO-3322077">
    <property type="pathway name" value="Glycogen synthesis"/>
</dbReference>
<dbReference type="PRO" id="PR:Q5U2R5"/>
<dbReference type="Proteomes" id="UP000002494">
    <property type="component" value="Unplaced"/>
</dbReference>
<dbReference type="GO" id="GO:0005829">
    <property type="term" value="C:cytosol"/>
    <property type="evidence" value="ECO:0000266"/>
    <property type="project" value="RGD"/>
</dbReference>
<dbReference type="GO" id="GO:0042587">
    <property type="term" value="C:glycogen granule"/>
    <property type="evidence" value="ECO:0000314"/>
    <property type="project" value="RGD"/>
</dbReference>
<dbReference type="GO" id="GO:0000164">
    <property type="term" value="C:protein phosphatase type 1 complex"/>
    <property type="evidence" value="ECO:0000318"/>
    <property type="project" value="GO_Central"/>
</dbReference>
<dbReference type="GO" id="GO:0050196">
    <property type="term" value="F:[phosphorylase] phosphatase activity"/>
    <property type="evidence" value="ECO:0000315"/>
    <property type="project" value="UniProtKB"/>
</dbReference>
<dbReference type="GO" id="GO:0019899">
    <property type="term" value="F:enzyme binding"/>
    <property type="evidence" value="ECO:0000315"/>
    <property type="project" value="RGD"/>
</dbReference>
<dbReference type="GO" id="GO:2001069">
    <property type="term" value="F:glycogen binding"/>
    <property type="evidence" value="ECO:0000266"/>
    <property type="project" value="RGD"/>
</dbReference>
<dbReference type="GO" id="GO:0060090">
    <property type="term" value="F:molecular adaptor activity"/>
    <property type="evidence" value="ECO:0000266"/>
    <property type="project" value="RGD"/>
</dbReference>
<dbReference type="GO" id="GO:0008157">
    <property type="term" value="F:protein phosphatase 1 binding"/>
    <property type="evidence" value="ECO:0000318"/>
    <property type="project" value="GO_Central"/>
</dbReference>
<dbReference type="GO" id="GO:0019903">
    <property type="term" value="F:protein phosphatase binding"/>
    <property type="evidence" value="ECO:0000250"/>
    <property type="project" value="UniProtKB"/>
</dbReference>
<dbReference type="GO" id="GO:0005978">
    <property type="term" value="P:glycogen biosynthetic process"/>
    <property type="evidence" value="ECO:0000250"/>
    <property type="project" value="UniProtKB"/>
</dbReference>
<dbReference type="GO" id="GO:0005977">
    <property type="term" value="P:glycogen metabolic process"/>
    <property type="evidence" value="ECO:0000250"/>
    <property type="project" value="UniProtKB"/>
</dbReference>
<dbReference type="GO" id="GO:0005979">
    <property type="term" value="P:regulation of glycogen biosynthetic process"/>
    <property type="evidence" value="ECO:0000314"/>
    <property type="project" value="RGD"/>
</dbReference>
<dbReference type="GO" id="GO:0005981">
    <property type="term" value="P:regulation of glycogen catabolic process"/>
    <property type="evidence" value="ECO:0000314"/>
    <property type="project" value="RGD"/>
</dbReference>
<dbReference type="CDD" id="cd22815">
    <property type="entry name" value="PBD_PPP1R3C"/>
    <property type="match status" value="1"/>
</dbReference>
<dbReference type="FunFam" id="2.60.40.2440:FF:000001">
    <property type="entry name" value="Protein phosphatase 1 regulatory subunit 3C"/>
    <property type="match status" value="1"/>
</dbReference>
<dbReference type="Gene3D" id="2.60.40.2440">
    <property type="entry name" value="Carbohydrate binding type-21 domain"/>
    <property type="match status" value="1"/>
</dbReference>
<dbReference type="InterPro" id="IPR005036">
    <property type="entry name" value="CBM21_dom"/>
</dbReference>
<dbReference type="InterPro" id="IPR038175">
    <property type="entry name" value="CBM21_dom_sf"/>
</dbReference>
<dbReference type="InterPro" id="IPR017434">
    <property type="entry name" value="Pase-1_reg-su_3B/C/D_met"/>
</dbReference>
<dbReference type="InterPro" id="IPR030683">
    <property type="entry name" value="PP1_3C"/>
</dbReference>
<dbReference type="InterPro" id="IPR050782">
    <property type="entry name" value="PP1_regulatory_subunit_3"/>
</dbReference>
<dbReference type="PANTHER" id="PTHR12307">
    <property type="entry name" value="PROTEIN PHOSPHATASE 1 REGULATORY SUBUNIT"/>
    <property type="match status" value="1"/>
</dbReference>
<dbReference type="PANTHER" id="PTHR12307:SF15">
    <property type="entry name" value="PROTEIN PHOSPHATASE 1 REGULATORY SUBUNIT 3C"/>
    <property type="match status" value="1"/>
</dbReference>
<dbReference type="Pfam" id="PF03370">
    <property type="entry name" value="CBM_21"/>
    <property type="match status" value="1"/>
</dbReference>
<dbReference type="PIRSF" id="PIRSF038207">
    <property type="entry name" value="PP1_GT_animal"/>
    <property type="match status" value="1"/>
</dbReference>
<dbReference type="PIRSF" id="PIRSF500813">
    <property type="entry name" value="PP1_PTG"/>
    <property type="match status" value="1"/>
</dbReference>
<dbReference type="PROSITE" id="PS51159">
    <property type="entry name" value="CBM21"/>
    <property type="match status" value="1"/>
</dbReference>
<gene>
    <name evidence="5" type="primary">Ppp1r3c</name>
    <name evidence="2" type="synonym">Ppp1r5</name>
</gene>
<keyword id="KW-0119">Carbohydrate metabolism</keyword>
<keyword id="KW-0321">Glycogen metabolism</keyword>
<keyword id="KW-1185">Reference proteome</keyword>
<keyword id="KW-0832">Ubl conjugation</keyword>
<accession>Q5U2R5</accession>
<proteinExistence type="evidence at transcript level"/>
<reference evidence="5" key="1">
    <citation type="journal article" date="2004" name="Genome Res.">
        <title>The status, quality, and expansion of the NIH full-length cDNA project: the Mammalian Gene Collection (MGC).</title>
        <authorList>
            <consortium name="The MGC Project Team"/>
        </authorList>
    </citation>
    <scope>NUCLEOTIDE SEQUENCE [LARGE SCALE MRNA]</scope>
    <source>
        <tissue evidence="5">Heart</tissue>
    </source>
</reference>
<sequence>MSCTRMIHVLDPRPLTSSVMPVDMAMRICLAHSPPLKSFLGPYNGLQRRHFVNKPKPLKPCLSVKQEAKSQKEWKSPHSQAKKRVVFADSKGLSLTAIHVFSDLPEEPAWDLQFDLLDLNDISSSLKLHEEKNLVFDFPQPSSDYLSFRDRFQKNFVCLENCSLQDRTVTGTVKVKNVSFEKKVQVRITFDTWKTYTDVDCVYLKNVYGSSDSDTFSFAIDLPRVIPTEEKIEFCISYHANGRVFWDNNEAQNYRIVHVQWKPDGVQTQVAPKDCAFQQVPLKTELEPTVFGSPRLASGLFPEWQSWGRVENLASYR</sequence>